<organism>
    <name type="scientific">Bos taurus</name>
    <name type="common">Bovine</name>
    <dbReference type="NCBI Taxonomy" id="9913"/>
    <lineage>
        <taxon>Eukaryota</taxon>
        <taxon>Metazoa</taxon>
        <taxon>Chordata</taxon>
        <taxon>Craniata</taxon>
        <taxon>Vertebrata</taxon>
        <taxon>Euteleostomi</taxon>
        <taxon>Mammalia</taxon>
        <taxon>Eutheria</taxon>
        <taxon>Laurasiatheria</taxon>
        <taxon>Artiodactyla</taxon>
        <taxon>Ruminantia</taxon>
        <taxon>Pecora</taxon>
        <taxon>Bovidae</taxon>
        <taxon>Bovinae</taxon>
        <taxon>Bos</taxon>
    </lineage>
</organism>
<comment type="function">
    <text>Keeps in an inactive conformation TGFBR1, the TGF-beta type I serine/threonine kinase receptor, preventing TGF-beta receptor activation in absence of ligand. May modulate the RYR1 calcium channel activity. PPIases accelerate the folding of proteins. It catalyzes the cis-trans isomerization of proline imidic peptide bonds in oligopeptides.</text>
</comment>
<comment type="catalytic activity">
    <reaction evidence="2">
        <text>[protein]-peptidylproline (omega=180) = [protein]-peptidylproline (omega=0)</text>
        <dbReference type="Rhea" id="RHEA:16237"/>
        <dbReference type="Rhea" id="RHEA-COMP:10747"/>
        <dbReference type="Rhea" id="RHEA-COMP:10748"/>
        <dbReference type="ChEBI" id="CHEBI:83833"/>
        <dbReference type="ChEBI" id="CHEBI:83834"/>
        <dbReference type="EC" id="5.2.1.8"/>
    </reaction>
</comment>
<comment type="activity regulation">
    <text>Inhibited by both FK506 and rapamycin.</text>
</comment>
<comment type="subunit">
    <text evidence="1 2 3">Interacts with TGFBR1; prevents TGFBR1 phosphorylation by TGFBR2 and stabilizes it in the inactive conformation. Interacts with ACVR1B and SMAD7 (By similarity). Identified in a complex composed of RYR1, PDE4D, PKA, FKBP1A and protein phosphatase 1 (PP1) (By similarity). Interacts directly with RYR2 and RYR3. Interacts with GLMN; rapamycin and FK506 abolish the interaction with GLMN in a dose dependent manner (By similarity). Interacts directly with RYR1 (By similarity).</text>
</comment>
<comment type="subcellular location">
    <subcellularLocation>
        <location evidence="2">Cytoplasm</location>
        <location evidence="2">Cytosol</location>
    </subcellularLocation>
    <subcellularLocation>
        <location evidence="3">Sarcoplasmic reticulum membrane</location>
        <topology evidence="3">Peripheral membrane protein</topology>
        <orientation evidence="3">Cytoplasmic side</orientation>
    </subcellularLocation>
</comment>
<comment type="similarity">
    <text evidence="12">Belongs to the FKBP-type PPIase family. FKBP1 subfamily.</text>
</comment>
<comment type="caution">
    <text evidence="6 8 13 14">Was originally thought to be protein kinase C inhibitor 2 (PKCI-2 or 12 kDa inhibitor of protein kinase C). Later, was shown experimentally not to inhibit protein kinase C (PubMed:1710782, PubMed:1868545).</text>
</comment>
<dbReference type="EC" id="5.2.1.8" evidence="2"/>
<dbReference type="EMBL" id="BT021075">
    <property type="protein sequence ID" value="AAX09092.1"/>
    <property type="molecule type" value="mRNA"/>
</dbReference>
<dbReference type="PIR" id="A61431">
    <property type="entry name" value="A61431"/>
</dbReference>
<dbReference type="RefSeq" id="NP_001030533.1">
    <property type="nucleotide sequence ID" value="NM_001035456.2"/>
</dbReference>
<dbReference type="PDB" id="1FKK">
    <property type="method" value="X-ray"/>
    <property type="resolution" value="2.20 A"/>
    <property type="chains" value="A=2-108"/>
</dbReference>
<dbReference type="PDB" id="1FKL">
    <property type="method" value="X-ray"/>
    <property type="resolution" value="1.70 A"/>
    <property type="chains" value="A=2-108"/>
</dbReference>
<dbReference type="PDB" id="1TCO">
    <property type="method" value="X-ray"/>
    <property type="resolution" value="2.50 A"/>
    <property type="chains" value="C=2-108"/>
</dbReference>
<dbReference type="PDBsum" id="1FKK"/>
<dbReference type="PDBsum" id="1FKL"/>
<dbReference type="PDBsum" id="1TCO"/>
<dbReference type="BMRB" id="P18203"/>
<dbReference type="SMR" id="P18203"/>
<dbReference type="FunCoup" id="P18203">
    <property type="interactions" value="2765"/>
</dbReference>
<dbReference type="STRING" id="9913.ENSBTAP00000060070"/>
<dbReference type="BindingDB" id="P18203"/>
<dbReference type="PaxDb" id="9913-ENSBTAP00000010928"/>
<dbReference type="PeptideAtlas" id="P18203"/>
<dbReference type="Ensembl" id="ENSBTAT00000010928.6">
    <property type="protein sequence ID" value="ENSBTAP00000010928.4"/>
    <property type="gene ID" value="ENSBTAG00000008303.6"/>
</dbReference>
<dbReference type="GeneID" id="614795"/>
<dbReference type="KEGG" id="bta:614795"/>
<dbReference type="CTD" id="2280"/>
<dbReference type="VEuPathDB" id="HostDB:ENSBTAG00000008303"/>
<dbReference type="VGNC" id="VGNC:112449">
    <property type="gene designation" value="FKBP1A"/>
</dbReference>
<dbReference type="eggNOG" id="KOG0544">
    <property type="taxonomic scope" value="Eukaryota"/>
</dbReference>
<dbReference type="GeneTree" id="ENSGT00940000153311"/>
<dbReference type="HOGENOM" id="CLU_013615_12_1_1"/>
<dbReference type="InParanoid" id="P18203"/>
<dbReference type="OMA" id="WDEGFAG"/>
<dbReference type="OrthoDB" id="1902587at2759"/>
<dbReference type="TreeFam" id="TF105291"/>
<dbReference type="Reactome" id="R-BTA-166208">
    <property type="pathway name" value="mTORC1-mediated signalling"/>
</dbReference>
<dbReference type="Reactome" id="R-BTA-2025928">
    <property type="pathway name" value="Calcineurin activates NFAT"/>
</dbReference>
<dbReference type="Reactome" id="R-BTA-2173789">
    <property type="pathway name" value="TGF-beta receptor signaling activates SMADs"/>
</dbReference>
<dbReference type="EvolutionaryTrace" id="P18203"/>
<dbReference type="Proteomes" id="UP000009136">
    <property type="component" value="Chromosome 13"/>
</dbReference>
<dbReference type="Bgee" id="ENSBTAG00000008303">
    <property type="expression patterns" value="Expressed in occipital lobe and 104 other cell types or tissues"/>
</dbReference>
<dbReference type="GO" id="GO:0005737">
    <property type="term" value="C:cytoplasm"/>
    <property type="evidence" value="ECO:0000247"/>
    <property type="project" value="AgBase"/>
</dbReference>
<dbReference type="GO" id="GO:0098562">
    <property type="term" value="C:cytoplasmic side of membrane"/>
    <property type="evidence" value="ECO:0000250"/>
    <property type="project" value="UniProtKB"/>
</dbReference>
<dbReference type="GO" id="GO:0005829">
    <property type="term" value="C:cytosol"/>
    <property type="evidence" value="ECO:0000314"/>
    <property type="project" value="BHF-UCL"/>
</dbReference>
<dbReference type="GO" id="GO:0070062">
    <property type="term" value="C:extracellular exosome"/>
    <property type="evidence" value="ECO:0000247"/>
    <property type="project" value="AgBase"/>
</dbReference>
<dbReference type="GO" id="GO:0016020">
    <property type="term" value="C:membrane"/>
    <property type="evidence" value="ECO:0000247"/>
    <property type="project" value="AgBase"/>
</dbReference>
<dbReference type="GO" id="GO:1990425">
    <property type="term" value="C:ryanodine receptor complex"/>
    <property type="evidence" value="ECO:0000250"/>
    <property type="project" value="UniProtKB"/>
</dbReference>
<dbReference type="GO" id="GO:0016529">
    <property type="term" value="C:sarcoplasmic reticulum"/>
    <property type="evidence" value="ECO:0000250"/>
    <property type="project" value="UniProtKB"/>
</dbReference>
<dbReference type="GO" id="GO:0033017">
    <property type="term" value="C:sarcoplasmic reticulum membrane"/>
    <property type="evidence" value="ECO:0000247"/>
    <property type="project" value="AgBase"/>
</dbReference>
<dbReference type="GO" id="GO:0030018">
    <property type="term" value="C:Z disc"/>
    <property type="evidence" value="ECO:0000247"/>
    <property type="project" value="AgBase"/>
</dbReference>
<dbReference type="GO" id="GO:0048185">
    <property type="term" value="F:activin binding"/>
    <property type="evidence" value="ECO:0000247"/>
    <property type="project" value="AgBase"/>
</dbReference>
<dbReference type="GO" id="GO:0019855">
    <property type="term" value="F:calcium channel inhibitor activity"/>
    <property type="evidence" value="ECO:0000247"/>
    <property type="project" value="AgBase"/>
</dbReference>
<dbReference type="GO" id="GO:0005528">
    <property type="term" value="F:FK506 binding"/>
    <property type="evidence" value="ECO:0000247"/>
    <property type="project" value="AgBase"/>
</dbReference>
<dbReference type="GO" id="GO:0003755">
    <property type="term" value="F:peptidyl-prolyl cis-trans isomerase activity"/>
    <property type="evidence" value="ECO:0000314"/>
    <property type="project" value="BHF-UCL"/>
</dbReference>
<dbReference type="GO" id="GO:0042803">
    <property type="term" value="F:protein homodimerization activity"/>
    <property type="evidence" value="ECO:0000247"/>
    <property type="project" value="AgBase"/>
</dbReference>
<dbReference type="GO" id="GO:0046332">
    <property type="term" value="F:SMAD binding"/>
    <property type="evidence" value="ECO:0000247"/>
    <property type="project" value="AgBase"/>
</dbReference>
<dbReference type="GO" id="GO:0044325">
    <property type="term" value="F:transmembrane transporter binding"/>
    <property type="evidence" value="ECO:0000247"/>
    <property type="project" value="AgBase"/>
</dbReference>
<dbReference type="GO" id="GO:1990000">
    <property type="term" value="P:amyloid fibril formation"/>
    <property type="evidence" value="ECO:0000247"/>
    <property type="project" value="AgBase"/>
</dbReference>
<dbReference type="GO" id="GO:0019221">
    <property type="term" value="P:cytokine-mediated signaling pathway"/>
    <property type="evidence" value="ECO:0000247"/>
    <property type="project" value="AgBase"/>
</dbReference>
<dbReference type="GO" id="GO:0003007">
    <property type="term" value="P:heart morphogenesis"/>
    <property type="evidence" value="ECO:0000247"/>
    <property type="project" value="AgBase"/>
</dbReference>
<dbReference type="GO" id="GO:0060347">
    <property type="term" value="P:heart trabecula formation"/>
    <property type="evidence" value="ECO:0000247"/>
    <property type="project" value="AgBase"/>
</dbReference>
<dbReference type="GO" id="GO:0006936">
    <property type="term" value="P:muscle contraction"/>
    <property type="evidence" value="ECO:0000247"/>
    <property type="project" value="AgBase"/>
</dbReference>
<dbReference type="GO" id="GO:0032926">
    <property type="term" value="P:negative regulation of activin receptor signaling pathway"/>
    <property type="evidence" value="ECO:0000318"/>
    <property type="project" value="GO_Central"/>
</dbReference>
<dbReference type="GO" id="GO:0001933">
    <property type="term" value="P:negative regulation of protein phosphorylation"/>
    <property type="evidence" value="ECO:0000247"/>
    <property type="project" value="AgBase"/>
</dbReference>
<dbReference type="GO" id="GO:0051280">
    <property type="term" value="P:negative regulation of release of sequestered calcium ion into cytosol"/>
    <property type="evidence" value="ECO:0000247"/>
    <property type="project" value="AgBase"/>
</dbReference>
<dbReference type="GO" id="GO:0060315">
    <property type="term" value="P:negative regulation of ryanodine-sensitive calcium-release channel activity"/>
    <property type="evidence" value="ECO:0000247"/>
    <property type="project" value="AgBase"/>
</dbReference>
<dbReference type="GO" id="GO:0030512">
    <property type="term" value="P:negative regulation of transforming growth factor beta receptor signaling pathway"/>
    <property type="evidence" value="ECO:0000318"/>
    <property type="project" value="GO_Central"/>
</dbReference>
<dbReference type="GO" id="GO:0043123">
    <property type="term" value="P:positive regulation of canonical NF-kappaB signal transduction"/>
    <property type="evidence" value="ECO:0000247"/>
    <property type="project" value="AgBase"/>
</dbReference>
<dbReference type="GO" id="GO:0032092">
    <property type="term" value="P:positive regulation of protein binding"/>
    <property type="evidence" value="ECO:0000247"/>
    <property type="project" value="AgBase"/>
</dbReference>
<dbReference type="GO" id="GO:0031398">
    <property type="term" value="P:positive regulation of protein ubiquitination"/>
    <property type="evidence" value="ECO:0000247"/>
    <property type="project" value="AgBase"/>
</dbReference>
<dbReference type="GO" id="GO:0000413">
    <property type="term" value="P:protein peptidyl-prolyl isomerization"/>
    <property type="evidence" value="ECO:0000247"/>
    <property type="project" value="AgBase"/>
</dbReference>
<dbReference type="GO" id="GO:0032925">
    <property type="term" value="P:regulation of activin receptor signaling pathway"/>
    <property type="evidence" value="ECO:0000247"/>
    <property type="project" value="AgBase"/>
</dbReference>
<dbReference type="GO" id="GO:1902991">
    <property type="term" value="P:regulation of amyloid precursor protein catabolic process"/>
    <property type="evidence" value="ECO:0000247"/>
    <property type="project" value="AgBase"/>
</dbReference>
<dbReference type="GO" id="GO:0050776">
    <property type="term" value="P:regulation of immune response"/>
    <property type="evidence" value="ECO:0000247"/>
    <property type="project" value="AgBase"/>
</dbReference>
<dbReference type="GO" id="GO:0032880">
    <property type="term" value="P:regulation of protein localization"/>
    <property type="evidence" value="ECO:0000247"/>
    <property type="project" value="AgBase"/>
</dbReference>
<dbReference type="GO" id="GO:0060314">
    <property type="term" value="P:regulation of ryanodine-sensitive calcium-release channel activity"/>
    <property type="evidence" value="ECO:0000247"/>
    <property type="project" value="AgBase"/>
</dbReference>
<dbReference type="GO" id="GO:0051209">
    <property type="term" value="P:release of sequestered calcium ion into cytosol"/>
    <property type="evidence" value="ECO:0000247"/>
    <property type="project" value="AgBase"/>
</dbReference>
<dbReference type="GO" id="GO:0031000">
    <property type="term" value="P:response to caffeine"/>
    <property type="evidence" value="ECO:0000247"/>
    <property type="project" value="AgBase"/>
</dbReference>
<dbReference type="GO" id="GO:0097435">
    <property type="term" value="P:supramolecular fiber organization"/>
    <property type="evidence" value="ECO:0000247"/>
    <property type="project" value="AgBase"/>
</dbReference>
<dbReference type="GO" id="GO:0042110">
    <property type="term" value="P:T cell activation"/>
    <property type="evidence" value="ECO:0000303"/>
    <property type="project" value="BHF-UCL"/>
</dbReference>
<dbReference type="GO" id="GO:0042098">
    <property type="term" value="P:T cell proliferation"/>
    <property type="evidence" value="ECO:0000247"/>
    <property type="project" value="AgBase"/>
</dbReference>
<dbReference type="GO" id="GO:0055010">
    <property type="term" value="P:ventricular cardiac muscle tissue morphogenesis"/>
    <property type="evidence" value="ECO:0000247"/>
    <property type="project" value="AgBase"/>
</dbReference>
<dbReference type="FunFam" id="3.10.50.40:FF:000024">
    <property type="entry name" value="Peptidyl-prolyl cis-trans isomerase FKBP1A"/>
    <property type="match status" value="1"/>
</dbReference>
<dbReference type="Gene3D" id="3.10.50.40">
    <property type="match status" value="1"/>
</dbReference>
<dbReference type="InterPro" id="IPR050689">
    <property type="entry name" value="FKBP-type_PPIase"/>
</dbReference>
<dbReference type="InterPro" id="IPR046357">
    <property type="entry name" value="PPIase_dom_sf"/>
</dbReference>
<dbReference type="InterPro" id="IPR001179">
    <property type="entry name" value="PPIase_FKBP_dom"/>
</dbReference>
<dbReference type="PANTHER" id="PTHR10516">
    <property type="entry name" value="PEPTIDYL-PROLYL CIS-TRANS ISOMERASE"/>
    <property type="match status" value="1"/>
</dbReference>
<dbReference type="PANTHER" id="PTHR10516:SF301">
    <property type="entry name" value="PEPTIDYL-PROLYL CIS-TRANS ISOMERASE FKBP1A-RELATED"/>
    <property type="match status" value="1"/>
</dbReference>
<dbReference type="Pfam" id="PF00254">
    <property type="entry name" value="FKBP_C"/>
    <property type="match status" value="1"/>
</dbReference>
<dbReference type="SUPFAM" id="SSF54534">
    <property type="entry name" value="FKBP-like"/>
    <property type="match status" value="1"/>
</dbReference>
<dbReference type="PROSITE" id="PS50059">
    <property type="entry name" value="FKBP_PPIASE"/>
    <property type="match status" value="1"/>
</dbReference>
<name>FKB1A_BOVIN</name>
<protein>
    <recommendedName>
        <fullName>Peptidyl-prolyl cis-trans isomerase FKBP1A</fullName>
        <shortName>PPIase FKBP1A</shortName>
        <ecNumber evidence="2">5.2.1.8</ecNumber>
    </recommendedName>
    <alternativeName>
        <fullName evidence="11">12 kDa FK506-binding protein</fullName>
        <shortName>12 kDa FKBP</shortName>
        <shortName>FKBP-12</shortName>
    </alternativeName>
    <alternativeName>
        <fullName>Calstabin-1</fullName>
    </alternativeName>
    <alternativeName>
        <fullName>FK506-binding protein 1A</fullName>
        <shortName>FKBP-1A</shortName>
    </alternativeName>
    <alternativeName>
        <fullName>Immunophilin FKBP12</fullName>
    </alternativeName>
    <alternativeName>
        <fullName>Rotamase</fullName>
    </alternativeName>
</protein>
<reference key="1">
    <citation type="journal article" date="2005" name="BMC Genomics">
        <title>Characterization of 954 bovine full-CDS cDNA sequences.</title>
        <authorList>
            <person name="Harhay G.P."/>
            <person name="Sonstegard T.S."/>
            <person name="Keele J.W."/>
            <person name="Heaton M.P."/>
            <person name="Clawson M.L."/>
            <person name="Snelling W.M."/>
            <person name="Wiedmann R.T."/>
            <person name="Van Tassell C.P."/>
            <person name="Smith T.P.L."/>
        </authorList>
    </citation>
    <scope>NUCLEOTIDE SEQUENCE [LARGE SCALE MRNA]</scope>
</reference>
<reference key="2">
    <citation type="journal article" date="1990" name="Eur. J. Biochem.">
        <title>Amino acid sequence of a 12-kDa inhibitor of protein kinase C.</title>
        <authorList>
            <person name="Mozier N.M."/>
            <person name="Zuercher-Neely H.A."/>
            <person name="Guido D.M."/>
            <person name="Mathews W.R."/>
            <person name="Heinrikson R.L."/>
            <person name="Fraser E.D."/>
            <person name="Walsh M.P."/>
            <person name="Pearson J.D."/>
        </authorList>
    </citation>
    <scope>RETRACTED PAPER</scope>
    <source>
        <tissue>Brain</tissue>
    </source>
</reference>
<reference key="3">
    <citation type="journal article" date="1991" name="Eur. J. Biochem.">
        <title>Retraction concerning amino acid sequence of a 12-kDa inhibitor of protein kinase C. Mistaken identity of a protein kinase C inhibitor.</title>
        <authorList>
            <person name="Walsh M.P."/>
        </authorList>
    </citation>
    <scope>RETRACTION NOTICE OF PUBMED:2253615</scope>
</reference>
<reference key="4">
    <citation type="journal article" date="1991" name="J. Protein Chem.">
        <title>Complete amino acid sequence of the FK506 and rapamycin binding protein, FKBP, isolated from calf thymus.</title>
        <authorList>
            <person name="Lane W.S."/>
            <person name="Galat A."/>
            <person name="Harding M.W."/>
            <person name="Schreiber S.L."/>
        </authorList>
    </citation>
    <scope>PROTEIN SEQUENCE OF 2-108</scope>
    <source>
        <tissue>Thymus</tissue>
    </source>
</reference>
<reference key="5">
    <citation type="journal article" date="1990" name="J. Biol. Chem.">
        <title>The cytosolic-binding protein for the immunosuppressant FK-506 is both a ubiquitous and highly conserved peptidyl-prolyl cis-trans isomerase.</title>
        <authorList>
            <person name="Siekierka J.J."/>
            <person name="Widerrecht G."/>
            <person name="Greulich H."/>
            <person name="Boulton D."/>
            <person name="Hung S.H.Y."/>
            <person name="Cryan J."/>
            <person name="Hodges P.J."/>
            <person name="Sigal N.H."/>
        </authorList>
    </citation>
    <scope>PROTEIN SEQUENCE OF 2-87</scope>
</reference>
<reference key="6">
    <citation type="journal article" date="1989" name="Nature">
        <title>A receptor for the immunosuppressant FK506 is a cis-trans peptidyl-prolyl isomerase.</title>
        <authorList>
            <person name="Harding M.W."/>
            <person name="Galat A."/>
            <person name="Uehling D.E."/>
            <person name="Schreiber S.L."/>
        </authorList>
    </citation>
    <scope>PROTEIN SEQUENCE OF 2-41</scope>
</reference>
<reference key="7">
    <citation type="journal article" date="1991" name="Cell">
        <title>The peptidyl-prolyl isomerase, FK506-binding protein, is most likely the 12 kd endogenous inhibitor 2 of protein kinase C.</title>
        <authorList>
            <person name="Goebl M.G."/>
        </authorList>
    </citation>
    <scope>IDENTITY OF FKBP AND PKCI-2</scope>
</reference>
<reference key="8">
    <citation type="journal article" date="1991" name="Nature">
        <title>FK506 and protein kinase C.</title>
        <authorList>
            <person name="Tropschug A.M."/>
            <person name="Hofmann R."/>
        </authorList>
    </citation>
    <scope>IDENTITY OF FKBP AND PKCI-2</scope>
</reference>
<reference key="9">
    <citation type="journal article" date="1991" name="Cell">
        <title>The peptidyl-prolyl isomerase, FK506-binding protein, is not identical to protein kinase C inhibitor 2.</title>
        <authorList>
            <person name="Goebl M."/>
        </authorList>
    </citation>
    <scope>SHOWS THAT THE PROTEIN IS NOT AN INHIBITOR OF PROTEIN KINASE C</scope>
</reference>
<reference key="10">
    <citation type="journal article" date="1991" name="Nature">
        <title>Relationship of FKBP to PKCI-2.</title>
        <authorList>
            <person name="Albers M.W."/>
            <person name="Liu J."/>
            <person name="Schreiber S.L."/>
        </authorList>
    </citation>
    <scope>SHOWS THAT THE PROTEIN IS NOT AN INHIBITOR OF PROTEIN KINASE C</scope>
</reference>
<reference key="11">
    <citation type="journal article" date="1991" name="Nature">
        <title>Solution structure of the major binding protein for the immunosuppressant FK506.</title>
        <authorList>
            <person name="Moore J.M."/>
            <person name="Peattie D.A."/>
            <person name="Fitzgibbon M.J."/>
            <person name="Thomson J.A."/>
        </authorList>
    </citation>
    <scope>STRUCTURE BY NMR</scope>
</reference>
<reference key="12">
    <citation type="journal article" date="1995" name="Cell">
        <title>X-ray structure of calcineurin inhibited by the immunophilin-immunosuppressant FKBP12-FK506 complex.</title>
        <authorList>
            <person name="Griffith J.P."/>
            <person name="Kim J.L."/>
            <person name="Kim E.E."/>
            <person name="Sintchak M.D."/>
            <person name="Thomson J.A."/>
            <person name="Fitzgibbon M.J."/>
            <person name="Fleming M.A."/>
            <person name="Caron P.R."/>
            <person name="Hsiao K."/>
            <person name="Navia M.A."/>
        </authorList>
    </citation>
    <scope>X-RAY CRYSTALLOGRAPHY (2.5 ANGSTROMS) IN COMPLEX WITH PPP3R1 AND PPP3CA</scope>
</reference>
<accession>P18203</accession>
<accession>Q5E945</accession>
<feature type="initiator methionine" description="Removed" evidence="5 7 9 10">
    <location>
        <position position="1"/>
    </location>
</feature>
<feature type="chain" id="PRO_0000075288" description="Peptidyl-prolyl cis-trans isomerase FKBP1A">
    <location>
        <begin position="2"/>
        <end position="108"/>
    </location>
</feature>
<feature type="domain" description="PPIase FKBP-type" evidence="4">
    <location>
        <begin position="20"/>
        <end position="108"/>
    </location>
</feature>
<feature type="modified residue" description="N6-acetyllysine; alternate" evidence="1">
    <location>
        <position position="53"/>
    </location>
</feature>
<feature type="modified residue" description="N6-succinyllysine; alternate" evidence="1">
    <location>
        <position position="53"/>
    </location>
</feature>
<feature type="strand" evidence="15">
    <location>
        <begin position="3"/>
        <end position="9"/>
    </location>
</feature>
<feature type="strand" evidence="15">
    <location>
        <begin position="22"/>
        <end position="31"/>
    </location>
</feature>
<feature type="strand" evidence="15">
    <location>
        <begin position="36"/>
        <end position="40"/>
    </location>
</feature>
<feature type="turn" evidence="15">
    <location>
        <begin position="41"/>
        <end position="44"/>
    </location>
</feature>
<feature type="strand" evidence="15">
    <location>
        <begin position="47"/>
        <end position="50"/>
    </location>
</feature>
<feature type="strand" evidence="15">
    <location>
        <begin position="53"/>
        <end position="56"/>
    </location>
</feature>
<feature type="helix" evidence="15">
    <location>
        <begin position="58"/>
        <end position="65"/>
    </location>
</feature>
<feature type="strand" evidence="15">
    <location>
        <begin position="72"/>
        <end position="77"/>
    </location>
</feature>
<feature type="helix" evidence="15">
    <location>
        <begin position="79"/>
        <end position="81"/>
    </location>
</feature>
<feature type="turn" evidence="15">
    <location>
        <begin position="82"/>
        <end position="86"/>
    </location>
</feature>
<feature type="turn" evidence="15">
    <location>
        <begin position="89"/>
        <end position="91"/>
    </location>
</feature>
<feature type="strand" evidence="15">
    <location>
        <begin position="98"/>
        <end position="108"/>
    </location>
</feature>
<proteinExistence type="evidence at protein level"/>
<evidence type="ECO:0000250" key="1">
    <source>
        <dbReference type="UniProtKB" id="P26883"/>
    </source>
</evidence>
<evidence type="ECO:0000250" key="2">
    <source>
        <dbReference type="UniProtKB" id="P62942"/>
    </source>
</evidence>
<evidence type="ECO:0000250" key="3">
    <source>
        <dbReference type="UniProtKB" id="P62943"/>
    </source>
</evidence>
<evidence type="ECO:0000255" key="4">
    <source>
        <dbReference type="PROSITE-ProRule" id="PRU00277"/>
    </source>
</evidence>
<evidence type="ECO:0000269" key="5">
    <source>
    </source>
</evidence>
<evidence type="ECO:0000269" key="6">
    <source>
    </source>
</evidence>
<evidence type="ECO:0000269" key="7">
    <source>
    </source>
</evidence>
<evidence type="ECO:0000269" key="8">
    <source>
    </source>
</evidence>
<evidence type="ECO:0000269" key="9">
    <source>
    </source>
</evidence>
<evidence type="ECO:0000269" key="10">
    <source>
    </source>
</evidence>
<evidence type="ECO:0000303" key="11">
    <source>
    </source>
</evidence>
<evidence type="ECO:0000305" key="12"/>
<evidence type="ECO:0000305" key="13">
    <source>
    </source>
</evidence>
<evidence type="ECO:0000305" key="14">
    <source>
    </source>
</evidence>
<evidence type="ECO:0007829" key="15">
    <source>
        <dbReference type="PDB" id="1FKL"/>
    </source>
</evidence>
<keyword id="KW-0002">3D-structure</keyword>
<keyword id="KW-0007">Acetylation</keyword>
<keyword id="KW-0963">Cytoplasm</keyword>
<keyword id="KW-0903">Direct protein sequencing</keyword>
<keyword id="KW-0413">Isomerase</keyword>
<keyword id="KW-0472">Membrane</keyword>
<keyword id="KW-1185">Reference proteome</keyword>
<keyword id="KW-0697">Rotamase</keyword>
<keyword id="KW-0703">Sarcoplasmic reticulum</keyword>
<gene>
    <name type="primary">FKBP1A</name>
    <name type="synonym">FKBP1</name>
</gene>
<sequence length="108" mass="11910">MGVQVETISPGDGRTFPKRGQTCVVHYTGMLEDGKKFDSSRDRNKPFKFVLGKQEVIRGWEEGVAQMSVGQRAKLTISPDYAYGATGHPGIIPPNATLIFDVELLKLE</sequence>